<comment type="function">
    <text>Snake venom phospholipase A2 (PLA2) that inhibits neuromuscular transmission by blocking acetylcholine release from the nerve termini. PLA2 catalyzes the calcium-dependent hydrolysis of the 2-acyl groups in 3-sn-phosphoglycerides.</text>
</comment>
<comment type="catalytic activity">
    <reaction evidence="3 4">
        <text>a 1,2-diacyl-sn-glycero-3-phosphocholine + H2O = a 1-acyl-sn-glycero-3-phosphocholine + a fatty acid + H(+)</text>
        <dbReference type="Rhea" id="RHEA:15801"/>
        <dbReference type="ChEBI" id="CHEBI:15377"/>
        <dbReference type="ChEBI" id="CHEBI:15378"/>
        <dbReference type="ChEBI" id="CHEBI:28868"/>
        <dbReference type="ChEBI" id="CHEBI:57643"/>
        <dbReference type="ChEBI" id="CHEBI:58168"/>
        <dbReference type="EC" id="3.1.1.4"/>
    </reaction>
</comment>
<comment type="cofactor">
    <cofactor evidence="12">
        <name>Ca(2+)</name>
        <dbReference type="ChEBI" id="CHEBI:29108"/>
    </cofactor>
    <text evidence="12">Binds 1 Ca(2+) ion.</text>
</comment>
<comment type="subunit">
    <text evidence="8">Heterodimer; disulfide-linked. The A chains have phospholipase A2 activity and the B chains show homology with the basic protease inhibitors. The A1 chain is found in beta-1 and beta-2 bungarotoxins.</text>
</comment>
<comment type="subcellular location">
    <subcellularLocation>
        <location evidence="6 7">Secreted</location>
    </subcellularLocation>
</comment>
<comment type="tissue specificity">
    <text evidence="10 11">Expressed by the venom gland.</text>
</comment>
<comment type="toxic dose">
    <text evidence="7">LD(50) is 0.019 mg/kg by intraperitoneal injection into mice (beta-1 bungarotoxin).</text>
</comment>
<comment type="toxic dose">
    <text evidence="7">LD(50) is 0.029 mg/kg by intraperitoneal injection into mice (beta-2 bungarotoxin).</text>
</comment>
<comment type="similarity">
    <text evidence="9">Belongs to the phospholipase A2 family. Group I subfamily. D49 sub-subfamily.</text>
</comment>
<dbReference type="EC" id="3.1.1.4"/>
<dbReference type="EMBL" id="AJ431710">
    <property type="protein sequence ID" value="CAD24465.1"/>
    <property type="molecule type" value="Genomic_DNA"/>
</dbReference>
<dbReference type="EMBL" id="AJ431709">
    <property type="protein sequence ID" value="CAD24464.1"/>
    <property type="molecule type" value="Genomic_DNA"/>
</dbReference>
<dbReference type="EMBL" id="AJ431711">
    <property type="protein sequence ID" value="CAD24466.1"/>
    <property type="molecule type" value="mRNA"/>
</dbReference>
<dbReference type="EMBL" id="AJ251360">
    <property type="protein sequence ID" value="CAB62164.1"/>
    <property type="molecule type" value="Genomic_DNA"/>
</dbReference>
<dbReference type="EMBL" id="AJ242011">
    <property type="protein sequence ID" value="CAB62383.1"/>
    <property type="molecule type" value="mRNA"/>
</dbReference>
<dbReference type="PDB" id="1BUN">
    <property type="method" value="X-ray"/>
    <property type="resolution" value="2.45 A"/>
    <property type="chains" value="A=28-147"/>
</dbReference>
<dbReference type="PDBsum" id="1BUN"/>
<dbReference type="SMR" id="P00617"/>
<dbReference type="MINT" id="P00617"/>
<dbReference type="EvolutionaryTrace" id="P00617"/>
<dbReference type="GO" id="GO:0005576">
    <property type="term" value="C:extracellular region"/>
    <property type="evidence" value="ECO:0007669"/>
    <property type="project" value="UniProtKB-SubCell"/>
</dbReference>
<dbReference type="GO" id="GO:0005509">
    <property type="term" value="F:calcium ion binding"/>
    <property type="evidence" value="ECO:0007669"/>
    <property type="project" value="InterPro"/>
</dbReference>
<dbReference type="GO" id="GO:0047498">
    <property type="term" value="F:calcium-dependent phospholipase A2 activity"/>
    <property type="evidence" value="ECO:0007669"/>
    <property type="project" value="TreeGrafter"/>
</dbReference>
<dbReference type="GO" id="GO:0005543">
    <property type="term" value="F:phospholipid binding"/>
    <property type="evidence" value="ECO:0007669"/>
    <property type="project" value="TreeGrafter"/>
</dbReference>
<dbReference type="GO" id="GO:0090729">
    <property type="term" value="F:toxin activity"/>
    <property type="evidence" value="ECO:0007669"/>
    <property type="project" value="UniProtKB-KW"/>
</dbReference>
<dbReference type="GO" id="GO:0050482">
    <property type="term" value="P:arachidonate secretion"/>
    <property type="evidence" value="ECO:0007669"/>
    <property type="project" value="InterPro"/>
</dbReference>
<dbReference type="GO" id="GO:0016042">
    <property type="term" value="P:lipid catabolic process"/>
    <property type="evidence" value="ECO:0007669"/>
    <property type="project" value="UniProtKB-KW"/>
</dbReference>
<dbReference type="GO" id="GO:0006644">
    <property type="term" value="P:phospholipid metabolic process"/>
    <property type="evidence" value="ECO:0007669"/>
    <property type="project" value="InterPro"/>
</dbReference>
<dbReference type="CDD" id="cd00125">
    <property type="entry name" value="PLA2c"/>
    <property type="match status" value="1"/>
</dbReference>
<dbReference type="FunFam" id="1.20.90.10:FF:000007">
    <property type="entry name" value="Acidic phospholipase A2"/>
    <property type="match status" value="1"/>
</dbReference>
<dbReference type="Gene3D" id="1.20.90.10">
    <property type="entry name" value="Phospholipase A2 domain"/>
    <property type="match status" value="1"/>
</dbReference>
<dbReference type="InterPro" id="IPR001211">
    <property type="entry name" value="PLipase_A2"/>
</dbReference>
<dbReference type="InterPro" id="IPR033112">
    <property type="entry name" value="PLipase_A2_Asp_AS"/>
</dbReference>
<dbReference type="InterPro" id="IPR016090">
    <property type="entry name" value="PLipase_A2_dom"/>
</dbReference>
<dbReference type="InterPro" id="IPR036444">
    <property type="entry name" value="PLipase_A2_dom_sf"/>
</dbReference>
<dbReference type="InterPro" id="IPR033113">
    <property type="entry name" value="PLipase_A2_His_AS"/>
</dbReference>
<dbReference type="PANTHER" id="PTHR11716:SF100">
    <property type="entry name" value="PHOSPHOLIPASE A2"/>
    <property type="match status" value="1"/>
</dbReference>
<dbReference type="PANTHER" id="PTHR11716">
    <property type="entry name" value="PHOSPHOLIPASE A2 FAMILY MEMBER"/>
    <property type="match status" value="1"/>
</dbReference>
<dbReference type="Pfam" id="PF00068">
    <property type="entry name" value="Phospholip_A2_1"/>
    <property type="match status" value="1"/>
</dbReference>
<dbReference type="PRINTS" id="PR00389">
    <property type="entry name" value="PHPHLIPASEA2"/>
</dbReference>
<dbReference type="SMART" id="SM00085">
    <property type="entry name" value="PA2c"/>
    <property type="match status" value="1"/>
</dbReference>
<dbReference type="SUPFAM" id="SSF48619">
    <property type="entry name" value="Phospholipase A2, PLA2"/>
    <property type="match status" value="1"/>
</dbReference>
<dbReference type="PROSITE" id="PS00119">
    <property type="entry name" value="PA2_ASP"/>
    <property type="match status" value="1"/>
</dbReference>
<dbReference type="PROSITE" id="PS00118">
    <property type="entry name" value="PA2_HIS"/>
    <property type="match status" value="1"/>
</dbReference>
<feature type="signal peptide" evidence="2">
    <location>
        <begin position="1"/>
        <end position="19"/>
    </location>
</feature>
<feature type="propeptide" id="PRO_0000022835" evidence="10 11">
    <location>
        <begin position="20"/>
        <end position="27"/>
    </location>
</feature>
<feature type="chain" id="PRO_0000022836" description="Basic phospholipase A2 beta-bungarotoxin A1 chain" evidence="6 7">
    <location>
        <begin position="28"/>
        <end position="147"/>
    </location>
</feature>
<feature type="active site" evidence="1">
    <location>
        <position position="75"/>
    </location>
</feature>
<feature type="active site" evidence="1">
    <location>
        <position position="121"/>
    </location>
</feature>
<feature type="binding site" evidence="12">
    <location>
        <position position="55"/>
    </location>
    <ligand>
        <name>Ca(2+)</name>
        <dbReference type="ChEBI" id="CHEBI:29108"/>
    </ligand>
</feature>
<feature type="binding site" evidence="12">
    <location>
        <position position="57"/>
    </location>
    <ligand>
        <name>Ca(2+)</name>
        <dbReference type="ChEBI" id="CHEBI:29108"/>
    </ligand>
</feature>
<feature type="binding site" evidence="12">
    <location>
        <position position="59"/>
    </location>
    <ligand>
        <name>Ca(2+)</name>
        <dbReference type="ChEBI" id="CHEBI:29108"/>
    </ligand>
</feature>
<feature type="binding site" evidence="12">
    <location>
        <position position="76"/>
    </location>
    <ligand>
        <name>Ca(2+)</name>
        <dbReference type="ChEBI" id="CHEBI:29108"/>
    </ligand>
</feature>
<feature type="disulfide bond" description="Interchain (with a B chain)" evidence="8">
    <location>
        <position position="42"/>
    </location>
</feature>
<feature type="disulfide bond" evidence="8 18">
    <location>
        <begin position="54"/>
        <end position="146"/>
    </location>
</feature>
<feature type="disulfide bond" evidence="8 18">
    <location>
        <begin position="56"/>
        <end position="72"/>
    </location>
</feature>
<feature type="disulfide bond" evidence="8 18">
    <location>
        <begin position="71"/>
        <end position="127"/>
    </location>
</feature>
<feature type="disulfide bond" evidence="8 18">
    <location>
        <begin position="78"/>
        <end position="120"/>
    </location>
</feature>
<feature type="disulfide bond" evidence="8 18">
    <location>
        <begin position="88"/>
        <end position="113"/>
    </location>
</feature>
<feature type="disulfide bond" evidence="8 18">
    <location>
        <begin position="106"/>
        <end position="118"/>
    </location>
</feature>
<feature type="sequence variant" description="In 20% of the molecules.">
    <original>I</original>
    <variation>V</variation>
    <location>
        <position position="116"/>
    </location>
</feature>
<feature type="mutagenesis site" description="Loss of PA2 activity. No loss in Ca(2+)-binding ability. Weak loss in folding." evidence="5">
    <original>C</original>
    <variation>S</variation>
    <location>
        <position position="42"/>
    </location>
</feature>
<feature type="sequence conflict" description="In Ref. 3; CAB62164." evidence="9" ref="3">
    <original>S</original>
    <variation>L</variation>
    <location>
        <position position="10"/>
    </location>
</feature>
<feature type="sequence conflict" description="In Ref. 1; CAD24464." evidence="9" ref="1">
    <original>A</original>
    <variation>S</variation>
    <location>
        <position position="19"/>
    </location>
</feature>
<feature type="sequence conflict" description="In Ref. 5; AA sequence and 6; AA sequence." evidence="9" ref="5 6">
    <original>QS</original>
    <variation>SQ</variation>
    <location>
        <begin position="93"/>
        <end position="94"/>
    </location>
</feature>
<feature type="sequence conflict" description="In Ref. 5; AA sequence and 6; AA sequence." evidence="9" ref="5 6">
    <original>NSE</original>
    <variation>QSD</variation>
    <location>
        <begin position="130"/>
        <end position="132"/>
    </location>
</feature>
<feature type="helix" evidence="19">
    <location>
        <begin position="29"/>
        <end position="37"/>
    </location>
</feature>
<feature type="helix" evidence="19">
    <location>
        <begin position="47"/>
        <end position="50"/>
    </location>
</feature>
<feature type="turn" evidence="19">
    <location>
        <begin position="53"/>
        <end position="55"/>
    </location>
</feature>
<feature type="strand" evidence="19">
    <location>
        <begin position="56"/>
        <end position="58"/>
    </location>
</feature>
<feature type="helix" evidence="19">
    <location>
        <begin position="67"/>
        <end position="83"/>
    </location>
</feature>
<feature type="turn" evidence="19">
    <location>
        <begin position="84"/>
        <end position="86"/>
    </location>
</feature>
<feature type="turn" evidence="19">
    <location>
        <begin position="90"/>
        <end position="92"/>
    </location>
</feature>
<feature type="strand" evidence="19">
    <location>
        <begin position="97"/>
        <end position="100"/>
    </location>
</feature>
<feature type="strand" evidence="19">
    <location>
        <begin position="103"/>
        <end position="106"/>
    </location>
</feature>
<feature type="helix" evidence="19">
    <location>
        <begin position="113"/>
        <end position="130"/>
    </location>
</feature>
<feature type="helix" evidence="19">
    <location>
        <begin position="135"/>
        <end position="137"/>
    </location>
</feature>
<feature type="helix" evidence="19">
    <location>
        <begin position="142"/>
        <end position="145"/>
    </location>
</feature>
<name>PA2B1_BUNMU</name>
<keyword id="KW-0002">3D-structure</keyword>
<keyword id="KW-0106">Calcium</keyword>
<keyword id="KW-0903">Direct protein sequencing</keyword>
<keyword id="KW-1015">Disulfide bond</keyword>
<keyword id="KW-0378">Hydrolase</keyword>
<keyword id="KW-0442">Lipid degradation</keyword>
<keyword id="KW-0443">Lipid metabolism</keyword>
<keyword id="KW-0479">Metal-binding</keyword>
<keyword id="KW-0528">Neurotoxin</keyword>
<keyword id="KW-0638">Presynaptic neurotoxin</keyword>
<keyword id="KW-0964">Secreted</keyword>
<keyword id="KW-0732">Signal</keyword>
<keyword id="KW-0800">Toxin</keyword>
<organism>
    <name type="scientific">Bungarus multicinctus</name>
    <name type="common">Many-banded krait</name>
    <dbReference type="NCBI Taxonomy" id="8616"/>
    <lineage>
        <taxon>Eukaryota</taxon>
        <taxon>Metazoa</taxon>
        <taxon>Chordata</taxon>
        <taxon>Craniata</taxon>
        <taxon>Vertebrata</taxon>
        <taxon>Euteleostomi</taxon>
        <taxon>Lepidosauria</taxon>
        <taxon>Squamata</taxon>
        <taxon>Bifurcata</taxon>
        <taxon>Unidentata</taxon>
        <taxon>Episquamata</taxon>
        <taxon>Toxicofera</taxon>
        <taxon>Serpentes</taxon>
        <taxon>Colubroidea</taxon>
        <taxon>Elapidae</taxon>
        <taxon>Bungarinae</taxon>
        <taxon>Bungarus</taxon>
    </lineage>
</organism>
<evidence type="ECO:0000250" key="1">
    <source>
        <dbReference type="UniProtKB" id="P14418"/>
    </source>
</evidence>
<evidence type="ECO:0000255" key="2"/>
<evidence type="ECO:0000255" key="3">
    <source>
        <dbReference type="PROSITE-ProRule" id="PRU10035"/>
    </source>
</evidence>
<evidence type="ECO:0000255" key="4">
    <source>
        <dbReference type="PROSITE-ProRule" id="PRU10036"/>
    </source>
</evidence>
<evidence type="ECO:0000269" key="5">
    <source>
    </source>
</evidence>
<evidence type="ECO:0000269" key="6">
    <source>
    </source>
</evidence>
<evidence type="ECO:0000269" key="7">
    <source>
    </source>
</evidence>
<evidence type="ECO:0000269" key="8">
    <source>
    </source>
</evidence>
<evidence type="ECO:0000305" key="9"/>
<evidence type="ECO:0000305" key="10">
    <source>
    </source>
</evidence>
<evidence type="ECO:0000305" key="11">
    <source>
    </source>
</evidence>
<evidence type="ECO:0000305" key="12">
    <source>
    </source>
</evidence>
<evidence type="ECO:0000312" key="13">
    <source>
        <dbReference type="EMBL" id="CAB62164.1"/>
    </source>
</evidence>
<evidence type="ECO:0000312" key="14">
    <source>
        <dbReference type="EMBL" id="CAB62383.1"/>
    </source>
</evidence>
<evidence type="ECO:0000312" key="15">
    <source>
        <dbReference type="EMBL" id="CAD24464.1"/>
    </source>
</evidence>
<evidence type="ECO:0000312" key="16">
    <source>
        <dbReference type="EMBL" id="CAD24465.1"/>
    </source>
</evidence>
<evidence type="ECO:0000312" key="17">
    <source>
        <dbReference type="EMBL" id="CAD24466.1"/>
    </source>
</evidence>
<evidence type="ECO:0007744" key="18">
    <source>
        <dbReference type="PDB" id="1BUN"/>
    </source>
</evidence>
<evidence type="ECO:0007829" key="19">
    <source>
        <dbReference type="PDB" id="1BUN"/>
    </source>
</evidence>
<protein>
    <recommendedName>
        <fullName>Basic phospholipase A2 beta-bungarotoxin A1 chain</fullName>
        <shortName>Beta-BuTX A1 chain</shortName>
        <shortName>svPLA2</shortName>
        <ecNumber>3.1.1.4</ecNumber>
    </recommendedName>
    <alternativeName>
        <fullName>Phosphatidylcholine 2-acylhydrolase</fullName>
    </alternativeName>
</protein>
<accession>P00617</accession>
<accession>Q546H2</accession>
<accession>Q8AXW1</accession>
<accession>Q8QFN8</accession>
<accession>Q9PU95</accession>
<accession>Q9PU98</accession>
<reference evidence="15 16" key="1">
    <citation type="journal article" date="2002" name="Toxicon">
        <title>The organization of the genes encoding the A chains of beta-bungarotoxins: evidence for the skipping of exon.</title>
        <authorList>
            <person name="Chu Y.P."/>
            <person name="Chang L.S."/>
        </authorList>
    </citation>
    <scope>NUCLEOTIDE SEQUENCE [GENOMIC DNA]</scope>
    <source>
        <tissue>Liver</tissue>
    </source>
</reference>
<reference evidence="17" key="2">
    <citation type="submission" date="2002-02" db="EMBL/GenBank/DDBJ databases">
        <title>Genomic organization of the genes encoding the A chains of beta-bungarotoxins.</title>
        <authorList>
            <person name="Chang L.-S."/>
            <person name="Chu Y.P."/>
        </authorList>
    </citation>
    <scope>NUCLEOTIDE SEQUENCE [MRNA]</scope>
    <source>
        <tissue>Venom gland</tissue>
    </source>
</reference>
<reference evidence="13" key="3">
    <citation type="journal article" date="2000" name="Eur. J. Biochem.">
        <title>Genetic organization of A chain and B chain of beta-bungarotoxin from Taiwan banded krait (Bungarus multicinctus). A chain genes and B chain genes do not share a common origin.</title>
        <authorList>
            <person name="Wu P.-F."/>
            <person name="Chang L.-S."/>
        </authorList>
    </citation>
    <scope>NUCLEOTIDE SEQUENCE [GENOMIC DNA] OF 10-147</scope>
    <source>
        <tissue>Liver</tissue>
    </source>
</reference>
<reference evidence="14" key="4">
    <citation type="journal article" date="2001" name="J. Protein Chem.">
        <title>Expression of A chain and B chain of beta-bungarotoxin from taiwan banded krait: the functional implication of the interchain disulfide bond between A chain and B chain.</title>
        <authorList>
            <person name="Wu P.-F."/>
            <person name="Chang L.-S."/>
        </authorList>
    </citation>
    <scope>NUCLEOTIDE SEQUENCE [MRNA] OF 11-147</scope>
    <scope>MUTAGENESIS OF CYS-42</scope>
    <source>
        <tissue>Venom gland</tissue>
    </source>
</reference>
<reference key="5">
    <citation type="journal article" date="1978" name="J. Biochem.">
        <title>Amino acid sequences of the two polypeptide chains in beta1-bungarotoxin from the venom of Bungarus multicinctus.</title>
        <authorList>
            <person name="Kondo K."/>
            <person name="Narita K."/>
            <person name="Lee C.-Y."/>
        </authorList>
    </citation>
    <scope>PROTEIN SEQUENCE OF 28-147</scope>
    <scope>SUBCELLULAR LOCATION</scope>
    <source>
        <tissue>Venom</tissue>
    </source>
</reference>
<reference key="6">
    <citation type="journal article" date="1982" name="J. Biochem.">
        <title>Amino acid sequence of beta 2-bungarotoxin from Bungarus multicinctus venom. The amino acid substitutions in the B chains.</title>
        <authorList>
            <person name="Kondo K."/>
            <person name="Toda H."/>
            <person name="Narita K."/>
            <person name="Lee C.-Y."/>
        </authorList>
    </citation>
    <scope>PROTEIN SEQUENCE OF 28-147</scope>
    <scope>SEQUENCE REVISION TO 112-114 AND 136</scope>
    <scope>SUBCELLULAR LOCATION</scope>
    <scope>TOXIC DOSE</scope>
</reference>
<reference key="7">
    <citation type="journal article" date="1978" name="J. Biochem.">
        <title>Characterization of phospholipase A activity of beta1-bungarotoxin from Bungarus multicinctus venom. II. Identification of the histidine residue of beta1-bungarotoxin modified by p-bromophenacyl bromide.</title>
        <authorList>
            <person name="Kondo K."/>
            <person name="Toda H."/>
            <person name="Narita K."/>
        </authorList>
    </citation>
    <scope>CHARACTERIZATION OF PHOSPHOLIPASE A2 ACTIVITY</scope>
</reference>
<reference key="8">
    <citation type="journal article" date="1977" name="Eur. J. Biochem.">
        <title>Isolation and characterization of presynaptically acting neurotoxins from the venom of Bungarus snakes.</title>
        <authorList>
            <person name="Abe T."/>
            <person name="Alema S."/>
            <person name="Miledi R."/>
        </authorList>
    </citation>
    <scope>CHARACTERIZATION OF PRESYNAPTIC NEUROTOXINS</scope>
</reference>
<reference key="9">
    <citation type="journal article" date="2001" name="Toxicon">
        <title>What does beta-bungarotoxin do at the neuromuscular junction?</title>
        <authorList>
            <person name="Rowan E.G."/>
        </authorList>
    </citation>
    <scope>REVIEW</scope>
</reference>
<reference key="10">
    <citation type="journal article" date="1995" name="Structure">
        <title>Structure of beta 2-bungarotoxin: potassium channel binding by Kunitz modules and targeted phospholipase action.</title>
        <authorList>
            <person name="Kwong P.D."/>
            <person name="McDonald N.Q."/>
            <person name="Sigler P.B."/>
            <person name="Hendrickson W.A."/>
        </authorList>
    </citation>
    <scope>X-RAY CRYSTALLOGRAPHY (2.45 ANGSTROMS) OF 28-147 IN COMPLEX WITH CALCIUM ION</scope>
    <scope>COFACTOR</scope>
    <scope>DISULFIDE BONDS</scope>
    <source>
        <tissue>Venom</tissue>
    </source>
</reference>
<proteinExistence type="evidence at protein level"/>
<sequence>MNPAHLLVLSAVCVSLLGAANIPPHPLNLINFMEMIRYTIPCEKTWGEYADYGCYCGAGGSGRPIDALDRCCYVHDNCYGDAEKKHKCNPKTQSYSYKLTKRTIICYGAAGTCGRIVCDCDRTAALCFGNSEYIEGHKNIDTARFCQ</sequence>